<evidence type="ECO:0000255" key="1">
    <source>
        <dbReference type="HAMAP-Rule" id="MF_03102"/>
    </source>
</evidence>
<evidence type="ECO:0000256" key="2">
    <source>
        <dbReference type="SAM" id="MobiDB-lite"/>
    </source>
</evidence>
<organism>
    <name type="scientific">Coprinopsis cinerea (strain Okayama-7 / 130 / ATCC MYA-4618 / FGSC 9003)</name>
    <name type="common">Inky cap fungus</name>
    <name type="synonym">Hormographiella aspergillata</name>
    <dbReference type="NCBI Taxonomy" id="240176"/>
    <lineage>
        <taxon>Eukaryota</taxon>
        <taxon>Fungi</taxon>
        <taxon>Dikarya</taxon>
        <taxon>Basidiomycota</taxon>
        <taxon>Agaricomycotina</taxon>
        <taxon>Agaricomycetes</taxon>
        <taxon>Agaricomycetidae</taxon>
        <taxon>Agaricales</taxon>
        <taxon>Agaricineae</taxon>
        <taxon>Psathyrellaceae</taxon>
        <taxon>Coprinopsis</taxon>
    </lineage>
</organism>
<name>MDM10_COPC7</name>
<gene>
    <name evidence="1" type="primary">MDM10</name>
    <name type="ORF">CC1G_00110</name>
</gene>
<keyword id="KW-0472">Membrane</keyword>
<keyword id="KW-0496">Mitochondrion</keyword>
<keyword id="KW-1000">Mitochondrion outer membrane</keyword>
<keyword id="KW-1185">Reference proteome</keyword>
<keyword id="KW-0812">Transmembrane</keyword>
<keyword id="KW-1134">Transmembrane beta strand</keyword>
<comment type="function">
    <text evidence="1">Component of the ERMES/MDM complex, which serves as a molecular tether to connect the endoplasmic reticulum and mitochondria. Components of this complex are involved in the control of mitochondrial shape and protein biogenesis and may function in phospholipid exchange. MDM10 is involved in the late assembly steps of the general translocase of the mitochondrial outer membrane (TOM complex). Functions in the TOM40-specific route of the assembly of outer membrane beta-barrel proteins, including the association of TOM40 with the receptor TOM22 and small TOM proteins. Can associate with the SAM(core) complex as well as the MDM12-MMM1 complex, both involved in late steps of the major beta-barrel assembly pathway, that is responsible for biogenesis of all outer membrane beta-barrel proteins. May act as a switch that shuttles between both complexes and channels precursor proteins into the TOM40-specific pathway. Plays a role in mitochondrial morphology and in the inheritance of mitochondria.</text>
</comment>
<comment type="subunit">
    <text evidence="1">Component of the ER-mitochondria encounter structure (ERMES) or MDM complex, composed of MMM1, MDM10, MDM12 and MDM34. Associates with the mitochondrial outer membrane sorting assembly machinery SAM(core) complex.</text>
</comment>
<comment type="subcellular location">
    <subcellularLocation>
        <location evidence="1">Mitochondrion outer membrane</location>
        <topology evidence="1">Multi-pass membrane protein</topology>
    </subcellularLocation>
    <text evidence="1">The ERMES/MDM complex localizes to a few discrete foci (around 10 per single cell), that represent mitochondria-endoplasmic reticulum junctions. These foci are often found next to mtDNA nucleoids.</text>
</comment>
<comment type="domain">
    <text>Lacks alpha-helical transmembrane segments, suggesting that it resides in the membrane via beta-sheet conformations similar to those predicted for other outer membrane proteins and porin.</text>
</comment>
<comment type="similarity">
    <text evidence="1">Belongs to the MDM10 family.</text>
</comment>
<feature type="chain" id="PRO_0000384176" description="Mitochondrial distribution and morphology protein 10">
    <location>
        <begin position="1"/>
        <end position="455"/>
    </location>
</feature>
<feature type="region of interest" description="Disordered" evidence="2">
    <location>
        <begin position="216"/>
        <end position="249"/>
    </location>
</feature>
<feature type="region of interest" description="Disordered" evidence="2">
    <location>
        <begin position="278"/>
        <end position="311"/>
    </location>
</feature>
<feature type="region of interest" description="Disordered" evidence="2">
    <location>
        <begin position="377"/>
        <end position="399"/>
    </location>
</feature>
<feature type="compositionally biased region" description="Low complexity" evidence="2">
    <location>
        <begin position="217"/>
        <end position="227"/>
    </location>
</feature>
<feature type="compositionally biased region" description="Polar residues" evidence="2">
    <location>
        <begin position="228"/>
        <end position="237"/>
    </location>
</feature>
<feature type="compositionally biased region" description="Pro residues" evidence="2">
    <location>
        <begin position="291"/>
        <end position="301"/>
    </location>
</feature>
<reference key="1">
    <citation type="journal article" date="2010" name="Proc. Natl. Acad. Sci. U.S.A.">
        <title>Insights into evolution of multicellular fungi from the assembled chromosomes of the mushroom Coprinopsis cinerea (Coprinus cinereus).</title>
        <authorList>
            <person name="Stajich J.E."/>
            <person name="Wilke S.K."/>
            <person name="Ahren D."/>
            <person name="Au C.H."/>
            <person name="Birren B.W."/>
            <person name="Borodovsky M."/>
            <person name="Burns C."/>
            <person name="Canbaeck B."/>
            <person name="Casselton L.A."/>
            <person name="Cheng C.K."/>
            <person name="Deng J."/>
            <person name="Dietrich F.S."/>
            <person name="Fargo D.C."/>
            <person name="Farman M.L."/>
            <person name="Gathman A.C."/>
            <person name="Goldberg J."/>
            <person name="Guigo R."/>
            <person name="Hoegger P.J."/>
            <person name="Hooker J.B."/>
            <person name="Huggins A."/>
            <person name="James T.Y."/>
            <person name="Kamada T."/>
            <person name="Kilaru S."/>
            <person name="Kodira C."/>
            <person name="Kuees U."/>
            <person name="Kupfer D."/>
            <person name="Kwan H.S."/>
            <person name="Lomsadze A."/>
            <person name="Li W."/>
            <person name="Lilly W.W."/>
            <person name="Ma L.-J."/>
            <person name="Mackey A.J."/>
            <person name="Manning G."/>
            <person name="Martin F."/>
            <person name="Muraguchi H."/>
            <person name="Natvig D.O."/>
            <person name="Palmerini H."/>
            <person name="Ramesh M.A."/>
            <person name="Rehmeyer C.J."/>
            <person name="Roe B.A."/>
            <person name="Shenoy N."/>
            <person name="Stanke M."/>
            <person name="Ter-Hovhannisyan V."/>
            <person name="Tunlid A."/>
            <person name="Velagapudi R."/>
            <person name="Vision T.J."/>
            <person name="Zeng Q."/>
            <person name="Zolan M.E."/>
            <person name="Pukkila P.J."/>
        </authorList>
    </citation>
    <scope>NUCLEOTIDE SEQUENCE [LARGE SCALE GENOMIC DNA]</scope>
    <source>
        <strain>Okayama-7 / 130 / ATCC MYA-4618 / FGSC 9003</strain>
    </source>
</reference>
<sequence>MHPFASYVLRTYYKATGWNEDNLYANLTRSSNAVLDFTVPRGLHFTVSKSPNPLFKTTYSMTAMPSLSGSLGYIFTSCDLNVLSSGTVRFKDMLDRFKVYDQPRRPEGKEEEWLAGERVDTRDYLLYGRFYLPSGRLDALYSTRLSPTVQLSVAAISDPISGTPVDGRRRTDPSNIMLNLQHDVGKWCTEYTYSAEDSMWGVRFLHNFGRLAPSSWETTNGENGTNTSAPGNASNSRAGVKRVDEEDAVEGGLRGRVSVGAELYFSAKERSAGVSTGIRFSTMPDATPPSAQIPPPSPFTPDPTTSGPSPALLNPRPYPQPPTTITALFNPMLGHIQSAYTARVSRDLALATRFDFNVYSYDSEWTMGAEWWLRRSPRSSTDSGEEGAEKPSYPSPLGEVHGVVKARASTNNDVSLMWEGRIRQMLVSLGVVSDLSSRAKPIKAIGIEVSYFSSE</sequence>
<protein>
    <recommendedName>
        <fullName evidence="1">Mitochondrial distribution and morphology protein 10</fullName>
    </recommendedName>
    <alternativeName>
        <fullName evidence="1">Mitochondrial inheritance component MDM10</fullName>
    </alternativeName>
</protein>
<proteinExistence type="inferred from homology"/>
<dbReference type="EMBL" id="AACS02000005">
    <property type="protein sequence ID" value="EAU84591.1"/>
    <property type="molecule type" value="Genomic_DNA"/>
</dbReference>
<dbReference type="RefSeq" id="XP_001836974.1">
    <property type="nucleotide sequence ID" value="XM_001836922.2"/>
</dbReference>
<dbReference type="SMR" id="A8NWS6"/>
<dbReference type="FunCoup" id="A8NWS6">
    <property type="interactions" value="48"/>
</dbReference>
<dbReference type="STRING" id="240176.A8NWS6"/>
<dbReference type="GeneID" id="6013529"/>
<dbReference type="KEGG" id="cci:CC1G_00110"/>
<dbReference type="VEuPathDB" id="FungiDB:CC1G_00110"/>
<dbReference type="eggNOG" id="ENOG502QUN5">
    <property type="taxonomic scope" value="Eukaryota"/>
</dbReference>
<dbReference type="HOGENOM" id="CLU_026505_2_0_1"/>
<dbReference type="InParanoid" id="A8NWS6"/>
<dbReference type="OMA" id="VPGYRQI"/>
<dbReference type="OrthoDB" id="2103793at2759"/>
<dbReference type="Proteomes" id="UP000001861">
    <property type="component" value="Unassembled WGS sequence"/>
</dbReference>
<dbReference type="GO" id="GO:0032865">
    <property type="term" value="C:ERMES complex"/>
    <property type="evidence" value="ECO:0007669"/>
    <property type="project" value="UniProtKB-UniRule"/>
</dbReference>
<dbReference type="GO" id="GO:0001401">
    <property type="term" value="C:SAM complex"/>
    <property type="evidence" value="ECO:0007669"/>
    <property type="project" value="TreeGrafter"/>
</dbReference>
<dbReference type="GO" id="GO:0051654">
    <property type="term" value="P:establishment of mitochondrion localization"/>
    <property type="evidence" value="ECO:0007669"/>
    <property type="project" value="TreeGrafter"/>
</dbReference>
<dbReference type="GO" id="GO:0000002">
    <property type="term" value="P:mitochondrial genome maintenance"/>
    <property type="evidence" value="ECO:0007669"/>
    <property type="project" value="UniProtKB-UniRule"/>
</dbReference>
<dbReference type="GO" id="GO:0070096">
    <property type="term" value="P:mitochondrial outer membrane translocase complex assembly"/>
    <property type="evidence" value="ECO:0007669"/>
    <property type="project" value="UniProtKB-UniRule"/>
</dbReference>
<dbReference type="GO" id="GO:1990456">
    <property type="term" value="P:mitochondrion-endoplasmic reticulum membrane tethering"/>
    <property type="evidence" value="ECO:0007669"/>
    <property type="project" value="UniProtKB-UniRule"/>
</dbReference>
<dbReference type="GO" id="GO:0015914">
    <property type="term" value="P:phospholipid transport"/>
    <property type="evidence" value="ECO:0007669"/>
    <property type="project" value="TreeGrafter"/>
</dbReference>
<dbReference type="GO" id="GO:0045040">
    <property type="term" value="P:protein insertion into mitochondrial outer membrane"/>
    <property type="evidence" value="ECO:0007669"/>
    <property type="project" value="UniProtKB-UniRule"/>
</dbReference>
<dbReference type="HAMAP" id="MF_03102">
    <property type="entry name" value="Mdm10"/>
    <property type="match status" value="1"/>
</dbReference>
<dbReference type="InterPro" id="IPR027539">
    <property type="entry name" value="Mdm10"/>
</dbReference>
<dbReference type="PANTHER" id="PTHR28035">
    <property type="entry name" value="MITOCHONDRIAL DISTRIBUTION AND MORPHOLOGY PROTEIN 10"/>
    <property type="match status" value="1"/>
</dbReference>
<dbReference type="PANTHER" id="PTHR28035:SF1">
    <property type="entry name" value="MITOCHONDRIAL DISTRIBUTION AND MORPHOLOGY PROTEIN 10"/>
    <property type="match status" value="1"/>
</dbReference>
<dbReference type="Pfam" id="PF12519">
    <property type="entry name" value="MDM10"/>
    <property type="match status" value="2"/>
</dbReference>
<accession>A8NWS6</accession>